<name>LOLA_SHIF8</name>
<gene>
    <name evidence="1" type="primary">lolA</name>
    <name type="ordered locus">SFV_0882</name>
</gene>
<reference key="1">
    <citation type="journal article" date="2006" name="BMC Genomics">
        <title>Complete genome sequence of Shigella flexneri 5b and comparison with Shigella flexneri 2a.</title>
        <authorList>
            <person name="Nie H."/>
            <person name="Yang F."/>
            <person name="Zhang X."/>
            <person name="Yang J."/>
            <person name="Chen L."/>
            <person name="Wang J."/>
            <person name="Xiong Z."/>
            <person name="Peng J."/>
            <person name="Sun L."/>
            <person name="Dong J."/>
            <person name="Xue Y."/>
            <person name="Xu X."/>
            <person name="Chen S."/>
            <person name="Yao Z."/>
            <person name="Shen Y."/>
            <person name="Jin Q."/>
        </authorList>
    </citation>
    <scope>NUCLEOTIDE SEQUENCE [LARGE SCALE GENOMIC DNA]</scope>
    <source>
        <strain>8401</strain>
    </source>
</reference>
<feature type="signal peptide" evidence="1">
    <location>
        <begin position="1"/>
        <end position="21"/>
    </location>
</feature>
<feature type="chain" id="PRO_1000005706" description="Outer-membrane lipoprotein carrier protein">
    <location>
        <begin position="22"/>
        <end position="203"/>
    </location>
</feature>
<accession>Q0T8N1</accession>
<protein>
    <recommendedName>
        <fullName evidence="1">Outer-membrane lipoprotein carrier protein</fullName>
    </recommendedName>
</protein>
<comment type="function">
    <text evidence="1">Participates in the translocation of lipoproteins from the inner membrane to the outer membrane. Only forms a complex with a lipoprotein if the residue after the N-terminal Cys is not an aspartate (The Asp acts as a targeting signal to indicate that the lipoprotein should stay in the inner membrane).</text>
</comment>
<comment type="subunit">
    <text evidence="1">Monomer.</text>
</comment>
<comment type="subcellular location">
    <subcellularLocation>
        <location evidence="1">Periplasm</location>
    </subcellularLocation>
</comment>
<comment type="similarity">
    <text evidence="1">Belongs to the LolA family.</text>
</comment>
<proteinExistence type="inferred from homology"/>
<evidence type="ECO:0000255" key="1">
    <source>
        <dbReference type="HAMAP-Rule" id="MF_00240"/>
    </source>
</evidence>
<sequence length="203" mass="22497">MKKIAITCALLSSLVASSVWADAASDLKSRLDKVSSFHASFTQKVTDGSGAAVQEGQGDLWVKRPNLFNWHMTQPDESILVSDGKTLWFYNPFVEQATATWLKDATGNTPFMLIARNQSSDWQQYNIKQNGDDFVLTPKASNGNLKQFTINVGRDGTIHQFSAVEQDDQRSSYQLKSQQNGAVDAAKFTFTPPQGVTVDDQRK</sequence>
<keyword id="KW-0143">Chaperone</keyword>
<keyword id="KW-0574">Periplasm</keyword>
<keyword id="KW-0653">Protein transport</keyword>
<keyword id="KW-0732">Signal</keyword>
<keyword id="KW-0813">Transport</keyword>
<dbReference type="EMBL" id="CP000266">
    <property type="protein sequence ID" value="ABF03107.1"/>
    <property type="molecule type" value="Genomic_DNA"/>
</dbReference>
<dbReference type="RefSeq" id="WP_001295343.1">
    <property type="nucleotide sequence ID" value="NC_008258.1"/>
</dbReference>
<dbReference type="SMR" id="Q0T8N1"/>
<dbReference type="GeneID" id="93776529"/>
<dbReference type="KEGG" id="sfv:SFV_0882"/>
<dbReference type="HOGENOM" id="CLU_087560_1_1_6"/>
<dbReference type="Proteomes" id="UP000000659">
    <property type="component" value="Chromosome"/>
</dbReference>
<dbReference type="GO" id="GO:0030288">
    <property type="term" value="C:outer membrane-bounded periplasmic space"/>
    <property type="evidence" value="ECO:0007669"/>
    <property type="project" value="TreeGrafter"/>
</dbReference>
<dbReference type="GO" id="GO:0044874">
    <property type="term" value="P:lipoprotein localization to outer membrane"/>
    <property type="evidence" value="ECO:0007669"/>
    <property type="project" value="UniProtKB-UniRule"/>
</dbReference>
<dbReference type="GO" id="GO:0042953">
    <property type="term" value="P:lipoprotein transport"/>
    <property type="evidence" value="ECO:0007669"/>
    <property type="project" value="InterPro"/>
</dbReference>
<dbReference type="CDD" id="cd16325">
    <property type="entry name" value="LolA"/>
    <property type="match status" value="1"/>
</dbReference>
<dbReference type="FunFam" id="2.50.20.10:FF:000001">
    <property type="entry name" value="Outer-membrane lipoprotein carrier protein"/>
    <property type="match status" value="1"/>
</dbReference>
<dbReference type="Gene3D" id="2.50.20.10">
    <property type="entry name" value="Lipoprotein localisation LolA/LolB/LppX"/>
    <property type="match status" value="1"/>
</dbReference>
<dbReference type="HAMAP" id="MF_00240">
    <property type="entry name" value="LolA"/>
    <property type="match status" value="1"/>
</dbReference>
<dbReference type="InterPro" id="IPR029046">
    <property type="entry name" value="LolA/LolB/LppX"/>
</dbReference>
<dbReference type="InterPro" id="IPR004564">
    <property type="entry name" value="OM_lipoprot_carrier_LolA-like"/>
</dbReference>
<dbReference type="InterPro" id="IPR018323">
    <property type="entry name" value="OM_lipoprot_carrier_LolA_Pbac"/>
</dbReference>
<dbReference type="NCBIfam" id="TIGR00547">
    <property type="entry name" value="lolA"/>
    <property type="match status" value="1"/>
</dbReference>
<dbReference type="PANTHER" id="PTHR35869">
    <property type="entry name" value="OUTER-MEMBRANE LIPOPROTEIN CARRIER PROTEIN"/>
    <property type="match status" value="1"/>
</dbReference>
<dbReference type="PANTHER" id="PTHR35869:SF1">
    <property type="entry name" value="OUTER-MEMBRANE LIPOPROTEIN CARRIER PROTEIN"/>
    <property type="match status" value="1"/>
</dbReference>
<dbReference type="Pfam" id="PF03548">
    <property type="entry name" value="LolA"/>
    <property type="match status" value="1"/>
</dbReference>
<dbReference type="SUPFAM" id="SSF89392">
    <property type="entry name" value="Prokaryotic lipoproteins and lipoprotein localization factors"/>
    <property type="match status" value="1"/>
</dbReference>
<organism>
    <name type="scientific">Shigella flexneri serotype 5b (strain 8401)</name>
    <dbReference type="NCBI Taxonomy" id="373384"/>
    <lineage>
        <taxon>Bacteria</taxon>
        <taxon>Pseudomonadati</taxon>
        <taxon>Pseudomonadota</taxon>
        <taxon>Gammaproteobacteria</taxon>
        <taxon>Enterobacterales</taxon>
        <taxon>Enterobacteriaceae</taxon>
        <taxon>Shigella</taxon>
    </lineage>
</organism>